<protein>
    <recommendedName>
        <fullName evidence="1">Phospho-N-acetylmuramoyl-pentapeptide-transferase</fullName>
        <ecNumber evidence="1">2.7.8.13</ecNumber>
    </recommendedName>
    <alternativeName>
        <fullName evidence="1">UDP-MurNAc-pentapeptide phosphotransferase</fullName>
    </alternativeName>
</protein>
<organism>
    <name type="scientific">Pasteurella multocida (strain Pm70)</name>
    <dbReference type="NCBI Taxonomy" id="272843"/>
    <lineage>
        <taxon>Bacteria</taxon>
        <taxon>Pseudomonadati</taxon>
        <taxon>Pseudomonadota</taxon>
        <taxon>Gammaproteobacteria</taxon>
        <taxon>Pasteurellales</taxon>
        <taxon>Pasteurellaceae</taxon>
        <taxon>Pasteurella</taxon>
    </lineage>
</organism>
<gene>
    <name evidence="1" type="primary">mraY</name>
    <name type="ordered locus">PM0139</name>
</gene>
<keyword id="KW-0131">Cell cycle</keyword>
<keyword id="KW-0132">Cell division</keyword>
<keyword id="KW-0997">Cell inner membrane</keyword>
<keyword id="KW-1003">Cell membrane</keyword>
<keyword id="KW-0133">Cell shape</keyword>
<keyword id="KW-0961">Cell wall biogenesis/degradation</keyword>
<keyword id="KW-0460">Magnesium</keyword>
<keyword id="KW-0472">Membrane</keyword>
<keyword id="KW-0479">Metal-binding</keyword>
<keyword id="KW-0573">Peptidoglycan synthesis</keyword>
<keyword id="KW-1185">Reference proteome</keyword>
<keyword id="KW-0808">Transferase</keyword>
<keyword id="KW-0812">Transmembrane</keyword>
<keyword id="KW-1133">Transmembrane helix</keyword>
<accession>P57816</accession>
<name>MRAY_PASMU</name>
<evidence type="ECO:0000255" key="1">
    <source>
        <dbReference type="HAMAP-Rule" id="MF_00038"/>
    </source>
</evidence>
<proteinExistence type="inferred from homology"/>
<comment type="function">
    <text evidence="1">Catalyzes the initial step of the lipid cycle reactions in the biosynthesis of the cell wall peptidoglycan: transfers peptidoglycan precursor phospho-MurNAc-pentapeptide from UDP-MurNAc-pentapeptide onto the lipid carrier undecaprenyl phosphate, yielding undecaprenyl-pyrophosphoryl-MurNAc-pentapeptide, known as lipid I.</text>
</comment>
<comment type="catalytic activity">
    <reaction evidence="1">
        <text>UDP-N-acetyl-alpha-D-muramoyl-L-alanyl-gamma-D-glutamyl-meso-2,6-diaminopimeloyl-D-alanyl-D-alanine + di-trans,octa-cis-undecaprenyl phosphate = di-trans,octa-cis-undecaprenyl diphospho-N-acetyl-alpha-D-muramoyl-L-alanyl-D-glutamyl-meso-2,6-diaminopimeloyl-D-alanyl-D-alanine + UMP</text>
        <dbReference type="Rhea" id="RHEA:28386"/>
        <dbReference type="ChEBI" id="CHEBI:57865"/>
        <dbReference type="ChEBI" id="CHEBI:60392"/>
        <dbReference type="ChEBI" id="CHEBI:61386"/>
        <dbReference type="ChEBI" id="CHEBI:61387"/>
        <dbReference type="EC" id="2.7.8.13"/>
    </reaction>
</comment>
<comment type="cofactor">
    <cofactor evidence="1">
        <name>Mg(2+)</name>
        <dbReference type="ChEBI" id="CHEBI:18420"/>
    </cofactor>
</comment>
<comment type="pathway">
    <text evidence="1">Cell wall biogenesis; peptidoglycan biosynthesis.</text>
</comment>
<comment type="subcellular location">
    <subcellularLocation>
        <location evidence="1">Cell inner membrane</location>
        <topology evidence="1">Multi-pass membrane protein</topology>
    </subcellularLocation>
</comment>
<comment type="similarity">
    <text evidence="1">Belongs to the glycosyltransferase 4 family. MraY subfamily.</text>
</comment>
<reference key="1">
    <citation type="journal article" date="2001" name="Proc. Natl. Acad. Sci. U.S.A.">
        <title>Complete genomic sequence of Pasteurella multocida Pm70.</title>
        <authorList>
            <person name="May B.J."/>
            <person name="Zhang Q."/>
            <person name="Li L.L."/>
            <person name="Paustian M.L."/>
            <person name="Whittam T.S."/>
            <person name="Kapur V."/>
        </authorList>
    </citation>
    <scope>NUCLEOTIDE SEQUENCE [LARGE SCALE GENOMIC DNA]</scope>
    <source>
        <strain>Pm70</strain>
    </source>
</reference>
<sequence>MLVWLGEFLQQYYSGFNVISYITVRAILALLTALLVSLWIGPKVIRRLQLLKFGQEVRHDGPESHFSKRGTPTMGGVMILFAITVSTLLWANLANPYVWFSLFVLLGYGAIGFVDDYRKITRKNTDGLIARWKYFWLSVIALVAAFGMYAIGKDTDATRLVVPFFKEIMPQLGLFYIILTYFVIVGTSNAVNLTDGLDGLAIMPTVLVAGAFALIAWATGNVNFAEYLHIPYIKFSAELVVFCTAIVGAGLGFLWFNTYPAQVFMGDVGSLALGGALGVVAVLVRQEFLLVIMGGVFVVETLSVILQVGSYKLRKQRIFRMAPIHHHFELKGWPEPRVIVRFWIISLMLVLVGLVTLKLR</sequence>
<dbReference type="EC" id="2.7.8.13" evidence="1"/>
<dbReference type="EMBL" id="AE004439">
    <property type="protein sequence ID" value="AAK02223.1"/>
    <property type="molecule type" value="Genomic_DNA"/>
</dbReference>
<dbReference type="RefSeq" id="WP_005723035.1">
    <property type="nucleotide sequence ID" value="NC_002663.1"/>
</dbReference>
<dbReference type="SMR" id="P57816"/>
<dbReference type="STRING" id="272843.PM0139"/>
<dbReference type="EnsemblBacteria" id="AAK02223">
    <property type="protein sequence ID" value="AAK02223"/>
    <property type="gene ID" value="PM0139"/>
</dbReference>
<dbReference type="KEGG" id="pmu:PM0139"/>
<dbReference type="HOGENOM" id="CLU_023982_0_0_6"/>
<dbReference type="OrthoDB" id="9805475at2"/>
<dbReference type="UniPathway" id="UPA00219"/>
<dbReference type="Proteomes" id="UP000000809">
    <property type="component" value="Chromosome"/>
</dbReference>
<dbReference type="GO" id="GO:0005886">
    <property type="term" value="C:plasma membrane"/>
    <property type="evidence" value="ECO:0007669"/>
    <property type="project" value="UniProtKB-SubCell"/>
</dbReference>
<dbReference type="GO" id="GO:0046872">
    <property type="term" value="F:metal ion binding"/>
    <property type="evidence" value="ECO:0007669"/>
    <property type="project" value="UniProtKB-KW"/>
</dbReference>
<dbReference type="GO" id="GO:0008963">
    <property type="term" value="F:phospho-N-acetylmuramoyl-pentapeptide-transferase activity"/>
    <property type="evidence" value="ECO:0007669"/>
    <property type="project" value="UniProtKB-UniRule"/>
</dbReference>
<dbReference type="GO" id="GO:0051992">
    <property type="term" value="F:UDP-N-acetylmuramoyl-L-alanyl-D-glutamyl-meso-2,6-diaminopimelyl-D-alanyl-D-alanine:undecaprenyl-phosphate transferase activity"/>
    <property type="evidence" value="ECO:0007669"/>
    <property type="project" value="RHEA"/>
</dbReference>
<dbReference type="GO" id="GO:0051301">
    <property type="term" value="P:cell division"/>
    <property type="evidence" value="ECO:0007669"/>
    <property type="project" value="UniProtKB-KW"/>
</dbReference>
<dbReference type="GO" id="GO:0071555">
    <property type="term" value="P:cell wall organization"/>
    <property type="evidence" value="ECO:0007669"/>
    <property type="project" value="UniProtKB-KW"/>
</dbReference>
<dbReference type="GO" id="GO:0009252">
    <property type="term" value="P:peptidoglycan biosynthetic process"/>
    <property type="evidence" value="ECO:0007669"/>
    <property type="project" value="UniProtKB-UniRule"/>
</dbReference>
<dbReference type="GO" id="GO:0008360">
    <property type="term" value="P:regulation of cell shape"/>
    <property type="evidence" value="ECO:0007669"/>
    <property type="project" value="UniProtKB-KW"/>
</dbReference>
<dbReference type="CDD" id="cd06852">
    <property type="entry name" value="GT_MraY"/>
    <property type="match status" value="1"/>
</dbReference>
<dbReference type="HAMAP" id="MF_00038">
    <property type="entry name" value="MraY"/>
    <property type="match status" value="1"/>
</dbReference>
<dbReference type="InterPro" id="IPR000715">
    <property type="entry name" value="Glycosyl_transferase_4"/>
</dbReference>
<dbReference type="InterPro" id="IPR003524">
    <property type="entry name" value="PNAcMuramoyl-5peptid_Trfase"/>
</dbReference>
<dbReference type="InterPro" id="IPR018480">
    <property type="entry name" value="PNAcMuramoyl-5peptid_Trfase_CS"/>
</dbReference>
<dbReference type="NCBIfam" id="TIGR00445">
    <property type="entry name" value="mraY"/>
    <property type="match status" value="1"/>
</dbReference>
<dbReference type="PANTHER" id="PTHR22926">
    <property type="entry name" value="PHOSPHO-N-ACETYLMURAMOYL-PENTAPEPTIDE-TRANSFERASE"/>
    <property type="match status" value="1"/>
</dbReference>
<dbReference type="PANTHER" id="PTHR22926:SF5">
    <property type="entry name" value="PHOSPHO-N-ACETYLMURAMOYL-PENTAPEPTIDE-TRANSFERASE HOMOLOG"/>
    <property type="match status" value="1"/>
</dbReference>
<dbReference type="Pfam" id="PF00953">
    <property type="entry name" value="Glycos_transf_4"/>
    <property type="match status" value="1"/>
</dbReference>
<dbReference type="Pfam" id="PF10555">
    <property type="entry name" value="MraY_sig1"/>
    <property type="match status" value="1"/>
</dbReference>
<dbReference type="PROSITE" id="PS01347">
    <property type="entry name" value="MRAY_1"/>
    <property type="match status" value="1"/>
</dbReference>
<dbReference type="PROSITE" id="PS01348">
    <property type="entry name" value="MRAY_2"/>
    <property type="match status" value="1"/>
</dbReference>
<feature type="chain" id="PRO_0000108863" description="Phospho-N-acetylmuramoyl-pentapeptide-transferase">
    <location>
        <begin position="1"/>
        <end position="360"/>
    </location>
</feature>
<feature type="transmembrane region" description="Helical" evidence="1">
    <location>
        <begin position="21"/>
        <end position="41"/>
    </location>
</feature>
<feature type="transmembrane region" description="Helical" evidence="1">
    <location>
        <begin position="73"/>
        <end position="93"/>
    </location>
</feature>
<feature type="transmembrane region" description="Helical" evidence="1">
    <location>
        <begin position="94"/>
        <end position="114"/>
    </location>
</feature>
<feature type="transmembrane region" description="Helical" evidence="1">
    <location>
        <begin position="132"/>
        <end position="152"/>
    </location>
</feature>
<feature type="transmembrane region" description="Helical" evidence="1">
    <location>
        <begin position="168"/>
        <end position="188"/>
    </location>
</feature>
<feature type="transmembrane region" description="Helical" evidence="1">
    <location>
        <begin position="199"/>
        <end position="219"/>
    </location>
</feature>
<feature type="transmembrane region" description="Helical" evidence="1">
    <location>
        <begin position="235"/>
        <end position="255"/>
    </location>
</feature>
<feature type="transmembrane region" description="Helical" evidence="1">
    <location>
        <begin position="263"/>
        <end position="283"/>
    </location>
</feature>
<feature type="transmembrane region" description="Helical" evidence="1">
    <location>
        <begin position="288"/>
        <end position="308"/>
    </location>
</feature>
<feature type="transmembrane region" description="Helical" evidence="1">
    <location>
        <begin position="338"/>
        <end position="358"/>
    </location>
</feature>